<feature type="chain" id="PRO_0000250755" description="NAD(P)H-quinone oxidoreductase subunit I, chloroplastic">
    <location>
        <begin position="1"/>
        <end position="166"/>
    </location>
</feature>
<feature type="domain" description="4Fe-4S ferredoxin-type 1" evidence="1">
    <location>
        <begin position="55"/>
        <end position="84"/>
    </location>
</feature>
<feature type="domain" description="4Fe-4S ferredoxin-type 2" evidence="1">
    <location>
        <begin position="95"/>
        <end position="124"/>
    </location>
</feature>
<feature type="binding site" evidence="1">
    <location>
        <position position="64"/>
    </location>
    <ligand>
        <name>[4Fe-4S] cluster</name>
        <dbReference type="ChEBI" id="CHEBI:49883"/>
        <label>1</label>
    </ligand>
</feature>
<feature type="binding site" evidence="1">
    <location>
        <position position="67"/>
    </location>
    <ligand>
        <name>[4Fe-4S] cluster</name>
        <dbReference type="ChEBI" id="CHEBI:49883"/>
        <label>1</label>
    </ligand>
</feature>
<feature type="binding site" evidence="1">
    <location>
        <position position="70"/>
    </location>
    <ligand>
        <name>[4Fe-4S] cluster</name>
        <dbReference type="ChEBI" id="CHEBI:49883"/>
        <label>1</label>
    </ligand>
</feature>
<feature type="binding site" evidence="1">
    <location>
        <position position="74"/>
    </location>
    <ligand>
        <name>[4Fe-4S] cluster</name>
        <dbReference type="ChEBI" id="CHEBI:49883"/>
        <label>2</label>
    </ligand>
</feature>
<feature type="binding site" evidence="1">
    <location>
        <position position="104"/>
    </location>
    <ligand>
        <name>[4Fe-4S] cluster</name>
        <dbReference type="ChEBI" id="CHEBI:49883"/>
        <label>2</label>
    </ligand>
</feature>
<feature type="binding site" evidence="1">
    <location>
        <position position="107"/>
    </location>
    <ligand>
        <name>[4Fe-4S] cluster</name>
        <dbReference type="ChEBI" id="CHEBI:49883"/>
        <label>2</label>
    </ligand>
</feature>
<feature type="binding site" evidence="1">
    <location>
        <position position="110"/>
    </location>
    <ligand>
        <name>[4Fe-4S] cluster</name>
        <dbReference type="ChEBI" id="CHEBI:49883"/>
        <label>2</label>
    </ligand>
</feature>
<feature type="binding site" evidence="1">
    <location>
        <position position="114"/>
    </location>
    <ligand>
        <name>[4Fe-4S] cluster</name>
        <dbReference type="ChEBI" id="CHEBI:49883"/>
        <label>1</label>
    </ligand>
</feature>
<proteinExistence type="inferred from homology"/>
<reference key="1">
    <citation type="submission" date="2003-01" db="EMBL/GenBank/DDBJ databases">
        <title>Chloroplast DNA phylogeny of tribe Heliantheae (Asteraceae).</title>
        <authorList>
            <person name="Panero J.L."/>
            <person name="Baldwin B.G."/>
            <person name="Schilling E.E."/>
            <person name="Clevinger J.A."/>
        </authorList>
    </citation>
    <scope>NUCLEOTIDE SEQUENCE [GENOMIC DNA]</scope>
</reference>
<comment type="function">
    <text evidence="1">NDH shuttles electrons from NAD(P)H:plastoquinone, via FMN and iron-sulfur (Fe-S) centers, to quinones in the photosynthetic chain and possibly in a chloroplast respiratory chain. The immediate electron acceptor for the enzyme in this species is believed to be plastoquinone. Couples the redox reaction to proton translocation, and thus conserves the redox energy in a proton gradient.</text>
</comment>
<comment type="catalytic activity">
    <reaction evidence="1">
        <text>a plastoquinone + NADH + (n+1) H(+)(in) = a plastoquinol + NAD(+) + n H(+)(out)</text>
        <dbReference type="Rhea" id="RHEA:42608"/>
        <dbReference type="Rhea" id="RHEA-COMP:9561"/>
        <dbReference type="Rhea" id="RHEA-COMP:9562"/>
        <dbReference type="ChEBI" id="CHEBI:15378"/>
        <dbReference type="ChEBI" id="CHEBI:17757"/>
        <dbReference type="ChEBI" id="CHEBI:57540"/>
        <dbReference type="ChEBI" id="CHEBI:57945"/>
        <dbReference type="ChEBI" id="CHEBI:62192"/>
    </reaction>
</comment>
<comment type="catalytic activity">
    <reaction evidence="1">
        <text>a plastoquinone + NADPH + (n+1) H(+)(in) = a plastoquinol + NADP(+) + n H(+)(out)</text>
        <dbReference type="Rhea" id="RHEA:42612"/>
        <dbReference type="Rhea" id="RHEA-COMP:9561"/>
        <dbReference type="Rhea" id="RHEA-COMP:9562"/>
        <dbReference type="ChEBI" id="CHEBI:15378"/>
        <dbReference type="ChEBI" id="CHEBI:17757"/>
        <dbReference type="ChEBI" id="CHEBI:57783"/>
        <dbReference type="ChEBI" id="CHEBI:58349"/>
        <dbReference type="ChEBI" id="CHEBI:62192"/>
    </reaction>
</comment>
<comment type="cofactor">
    <cofactor evidence="1">
        <name>[4Fe-4S] cluster</name>
        <dbReference type="ChEBI" id="CHEBI:49883"/>
    </cofactor>
    <text evidence="1">Binds 2 [4Fe-4S] clusters per subunit.</text>
</comment>
<comment type="subunit">
    <text evidence="1">NDH is composed of at least 16 different subunits, 5 of which are encoded in the nucleus.</text>
</comment>
<comment type="subcellular location">
    <subcellularLocation>
        <location evidence="1">Plastid</location>
        <location evidence="1">Chloroplast thylakoid membrane</location>
        <topology evidence="1">Peripheral membrane protein</topology>
    </subcellularLocation>
</comment>
<comment type="similarity">
    <text evidence="1">Belongs to the complex I 23 kDa subunit family.</text>
</comment>
<gene>
    <name evidence="1" type="primary">ndhI</name>
</gene>
<protein>
    <recommendedName>
        <fullName evidence="1">NAD(P)H-quinone oxidoreductase subunit I, chloroplastic</fullName>
        <ecNumber evidence="1">7.1.1.-</ecNumber>
    </recommendedName>
    <alternativeName>
        <fullName evidence="1">NAD(P)H dehydrogenase subunit I</fullName>
        <shortName evidence="1">NDH subunit I</shortName>
    </alternativeName>
    <alternativeName>
        <fullName evidence="1">NADH-plastoquinone oxidoreductase subunit I</fullName>
    </alternativeName>
</protein>
<organism>
    <name type="scientific">Aphanactis jamesoniana</name>
    <dbReference type="NCBI Taxonomy" id="183005"/>
    <lineage>
        <taxon>Eukaryota</taxon>
        <taxon>Viridiplantae</taxon>
        <taxon>Streptophyta</taxon>
        <taxon>Embryophyta</taxon>
        <taxon>Tracheophyta</taxon>
        <taxon>Spermatophyta</taxon>
        <taxon>Magnoliopsida</taxon>
        <taxon>eudicotyledons</taxon>
        <taxon>Gunneridae</taxon>
        <taxon>Pentapetalae</taxon>
        <taxon>asterids</taxon>
        <taxon>campanulids</taxon>
        <taxon>Asterales</taxon>
        <taxon>Asteraceae</taxon>
        <taxon>Asteroideae</taxon>
        <taxon>Heliantheae alliance</taxon>
        <taxon>Millerieae</taxon>
        <taxon>Aphanactis</taxon>
    </lineage>
</organism>
<geneLocation type="chloroplast"/>
<name>NDHI_APHJA</name>
<accession>Q8HVV7</accession>
<keyword id="KW-0004">4Fe-4S</keyword>
<keyword id="KW-0150">Chloroplast</keyword>
<keyword id="KW-0408">Iron</keyword>
<keyword id="KW-0411">Iron-sulfur</keyword>
<keyword id="KW-0472">Membrane</keyword>
<keyword id="KW-0479">Metal-binding</keyword>
<keyword id="KW-0520">NAD</keyword>
<keyword id="KW-0521">NADP</keyword>
<keyword id="KW-0934">Plastid</keyword>
<keyword id="KW-0618">Plastoquinone</keyword>
<keyword id="KW-0874">Quinone</keyword>
<keyword id="KW-0677">Repeat</keyword>
<keyword id="KW-0793">Thylakoid</keyword>
<keyword id="KW-1278">Translocase</keyword>
<evidence type="ECO:0000255" key="1">
    <source>
        <dbReference type="HAMAP-Rule" id="MF_01351"/>
    </source>
</evidence>
<dbReference type="EC" id="7.1.1.-" evidence="1"/>
<dbReference type="EMBL" id="AF383755">
    <property type="protein sequence ID" value="AAN61697.1"/>
    <property type="molecule type" value="Genomic_DNA"/>
</dbReference>
<dbReference type="SMR" id="Q8HVV7"/>
<dbReference type="GO" id="GO:0009535">
    <property type="term" value="C:chloroplast thylakoid membrane"/>
    <property type="evidence" value="ECO:0007669"/>
    <property type="project" value="UniProtKB-SubCell"/>
</dbReference>
<dbReference type="GO" id="GO:0051539">
    <property type="term" value="F:4 iron, 4 sulfur cluster binding"/>
    <property type="evidence" value="ECO:0007669"/>
    <property type="project" value="UniProtKB-KW"/>
</dbReference>
<dbReference type="GO" id="GO:0005506">
    <property type="term" value="F:iron ion binding"/>
    <property type="evidence" value="ECO:0007669"/>
    <property type="project" value="UniProtKB-UniRule"/>
</dbReference>
<dbReference type="GO" id="GO:0008137">
    <property type="term" value="F:NADH dehydrogenase (ubiquinone) activity"/>
    <property type="evidence" value="ECO:0007669"/>
    <property type="project" value="InterPro"/>
</dbReference>
<dbReference type="GO" id="GO:0048038">
    <property type="term" value="F:quinone binding"/>
    <property type="evidence" value="ECO:0007669"/>
    <property type="project" value="UniProtKB-KW"/>
</dbReference>
<dbReference type="GO" id="GO:0019684">
    <property type="term" value="P:photosynthesis, light reaction"/>
    <property type="evidence" value="ECO:0007669"/>
    <property type="project" value="UniProtKB-UniRule"/>
</dbReference>
<dbReference type="FunFam" id="3.30.70.3270:FF:000006">
    <property type="entry name" value="NAD(P)H-quinone oxidoreductase subunit I, chloroplastic"/>
    <property type="match status" value="1"/>
</dbReference>
<dbReference type="Gene3D" id="3.30.70.3270">
    <property type="match status" value="1"/>
</dbReference>
<dbReference type="HAMAP" id="MF_01351">
    <property type="entry name" value="NDH1_NuoI"/>
    <property type="match status" value="1"/>
</dbReference>
<dbReference type="InterPro" id="IPR017896">
    <property type="entry name" value="4Fe4S_Fe-S-bd"/>
</dbReference>
<dbReference type="InterPro" id="IPR017900">
    <property type="entry name" value="4Fe4S_Fe_S_CS"/>
</dbReference>
<dbReference type="InterPro" id="IPR010226">
    <property type="entry name" value="NADH_quinone_OxRdtase_chainI"/>
</dbReference>
<dbReference type="InterPro" id="IPR004497">
    <property type="entry name" value="NDHI"/>
</dbReference>
<dbReference type="NCBIfam" id="TIGR00403">
    <property type="entry name" value="ndhI"/>
    <property type="match status" value="1"/>
</dbReference>
<dbReference type="NCBIfam" id="TIGR01971">
    <property type="entry name" value="NuoI"/>
    <property type="match status" value="1"/>
</dbReference>
<dbReference type="NCBIfam" id="NF004537">
    <property type="entry name" value="PRK05888.1-3"/>
    <property type="match status" value="1"/>
</dbReference>
<dbReference type="PANTHER" id="PTHR47275">
    <property type="entry name" value="NAD(P)H-QUINONE OXIDOREDUCTASE SUBUNIT I, CHLOROPLASTIC"/>
    <property type="match status" value="1"/>
</dbReference>
<dbReference type="PANTHER" id="PTHR47275:SF1">
    <property type="entry name" value="NAD(P)H-QUINONE OXIDOREDUCTASE SUBUNIT I, CHLOROPLASTIC"/>
    <property type="match status" value="1"/>
</dbReference>
<dbReference type="Pfam" id="PF00037">
    <property type="entry name" value="Fer4"/>
    <property type="match status" value="2"/>
</dbReference>
<dbReference type="SUPFAM" id="SSF54862">
    <property type="entry name" value="4Fe-4S ferredoxins"/>
    <property type="match status" value="1"/>
</dbReference>
<dbReference type="PROSITE" id="PS00198">
    <property type="entry name" value="4FE4S_FER_1"/>
    <property type="match status" value="2"/>
</dbReference>
<dbReference type="PROSITE" id="PS51379">
    <property type="entry name" value="4FE4S_FER_2"/>
    <property type="match status" value="2"/>
</dbReference>
<sequence>MFPMVTEFMNYGQQTVRATRYIGQGFMITLSHANRLPVTIQYPYEKLITSERFRGRIHFEFDKCIACEVCVRVCPIDLPVVDWKLETDIRKKRLLNYSIDFGICIFCGNCVEYCPTNCLSMTEEYELSTYDRHELNYNQIALGRLPMSIIDDYTIRTILNLPEIKT</sequence>